<keyword id="KW-0963">Cytoplasm</keyword>
<keyword id="KW-0648">Protein biosynthesis</keyword>
<name>RRF_AERS4</name>
<protein>
    <recommendedName>
        <fullName evidence="1">Ribosome-recycling factor</fullName>
        <shortName evidence="1">RRF</shortName>
    </recommendedName>
    <alternativeName>
        <fullName evidence="1">Ribosome-releasing factor</fullName>
    </alternativeName>
</protein>
<accession>A4SQH9</accession>
<gene>
    <name evidence="1" type="primary">frr</name>
    <name type="ordered locus">ASA_3157</name>
</gene>
<dbReference type="EMBL" id="CP000644">
    <property type="protein sequence ID" value="ABO91151.1"/>
    <property type="molecule type" value="Genomic_DNA"/>
</dbReference>
<dbReference type="RefSeq" id="WP_005312078.1">
    <property type="nucleotide sequence ID" value="NC_009348.1"/>
</dbReference>
<dbReference type="SMR" id="A4SQH9"/>
<dbReference type="STRING" id="29491.GCA_000820065_03538"/>
<dbReference type="GeneID" id="79880881"/>
<dbReference type="KEGG" id="asa:ASA_3157"/>
<dbReference type="eggNOG" id="COG0233">
    <property type="taxonomic scope" value="Bacteria"/>
</dbReference>
<dbReference type="HOGENOM" id="CLU_073981_2_1_6"/>
<dbReference type="Proteomes" id="UP000000225">
    <property type="component" value="Chromosome"/>
</dbReference>
<dbReference type="GO" id="GO:0005829">
    <property type="term" value="C:cytosol"/>
    <property type="evidence" value="ECO:0007669"/>
    <property type="project" value="GOC"/>
</dbReference>
<dbReference type="GO" id="GO:0043023">
    <property type="term" value="F:ribosomal large subunit binding"/>
    <property type="evidence" value="ECO:0007669"/>
    <property type="project" value="TreeGrafter"/>
</dbReference>
<dbReference type="GO" id="GO:0002184">
    <property type="term" value="P:cytoplasmic translational termination"/>
    <property type="evidence" value="ECO:0007669"/>
    <property type="project" value="TreeGrafter"/>
</dbReference>
<dbReference type="CDD" id="cd00520">
    <property type="entry name" value="RRF"/>
    <property type="match status" value="1"/>
</dbReference>
<dbReference type="FunFam" id="1.10.132.20:FF:000001">
    <property type="entry name" value="Ribosome-recycling factor"/>
    <property type="match status" value="1"/>
</dbReference>
<dbReference type="FunFam" id="3.30.1360.40:FF:000001">
    <property type="entry name" value="Ribosome-recycling factor"/>
    <property type="match status" value="1"/>
</dbReference>
<dbReference type="Gene3D" id="3.30.1360.40">
    <property type="match status" value="1"/>
</dbReference>
<dbReference type="Gene3D" id="1.10.132.20">
    <property type="entry name" value="Ribosome-recycling factor"/>
    <property type="match status" value="1"/>
</dbReference>
<dbReference type="HAMAP" id="MF_00040">
    <property type="entry name" value="RRF"/>
    <property type="match status" value="1"/>
</dbReference>
<dbReference type="InterPro" id="IPR002661">
    <property type="entry name" value="Ribosome_recyc_fac"/>
</dbReference>
<dbReference type="InterPro" id="IPR023584">
    <property type="entry name" value="Ribosome_recyc_fac_dom"/>
</dbReference>
<dbReference type="InterPro" id="IPR036191">
    <property type="entry name" value="RRF_sf"/>
</dbReference>
<dbReference type="NCBIfam" id="TIGR00496">
    <property type="entry name" value="frr"/>
    <property type="match status" value="1"/>
</dbReference>
<dbReference type="PANTHER" id="PTHR20982:SF3">
    <property type="entry name" value="MITOCHONDRIAL RIBOSOME RECYCLING FACTOR PSEUDO 1"/>
    <property type="match status" value="1"/>
</dbReference>
<dbReference type="PANTHER" id="PTHR20982">
    <property type="entry name" value="RIBOSOME RECYCLING FACTOR"/>
    <property type="match status" value="1"/>
</dbReference>
<dbReference type="Pfam" id="PF01765">
    <property type="entry name" value="RRF"/>
    <property type="match status" value="1"/>
</dbReference>
<dbReference type="SUPFAM" id="SSF55194">
    <property type="entry name" value="Ribosome recycling factor, RRF"/>
    <property type="match status" value="1"/>
</dbReference>
<proteinExistence type="inferred from homology"/>
<organism>
    <name type="scientific">Aeromonas salmonicida (strain A449)</name>
    <dbReference type="NCBI Taxonomy" id="382245"/>
    <lineage>
        <taxon>Bacteria</taxon>
        <taxon>Pseudomonadati</taxon>
        <taxon>Pseudomonadota</taxon>
        <taxon>Gammaproteobacteria</taxon>
        <taxon>Aeromonadales</taxon>
        <taxon>Aeromonadaceae</taxon>
        <taxon>Aeromonas</taxon>
    </lineage>
</organism>
<sequence length="185" mass="20668">MINEIKNDAKDRMAKSVESLKTQMSKIRTGRAHPSLLDGIQVEYYGAATPLKQLANVVAEDARTLSISIFDRSMIQAVEKAILTSDLGLNPSSNGQTLRVPLPPLTEERRRDLTKIVRAEAEGARVAVRNIRRDANADLKALLKDKEISEDDDRRAQEEIQKLTDSFIKLVDDALAAKEKELMEI</sequence>
<feature type="chain" id="PRO_1000003100" description="Ribosome-recycling factor">
    <location>
        <begin position="1"/>
        <end position="185"/>
    </location>
</feature>
<evidence type="ECO:0000255" key="1">
    <source>
        <dbReference type="HAMAP-Rule" id="MF_00040"/>
    </source>
</evidence>
<comment type="function">
    <text evidence="1">Responsible for the release of ribosomes from messenger RNA at the termination of protein biosynthesis. May increase the efficiency of translation by recycling ribosomes from one round of translation to another.</text>
</comment>
<comment type="subcellular location">
    <subcellularLocation>
        <location evidence="1">Cytoplasm</location>
    </subcellularLocation>
</comment>
<comment type="similarity">
    <text evidence="1">Belongs to the RRF family.</text>
</comment>
<reference key="1">
    <citation type="journal article" date="2008" name="BMC Genomics">
        <title>The genome of Aeromonas salmonicida subsp. salmonicida A449: insights into the evolution of a fish pathogen.</title>
        <authorList>
            <person name="Reith M.E."/>
            <person name="Singh R.K."/>
            <person name="Curtis B."/>
            <person name="Boyd J.M."/>
            <person name="Bouevitch A."/>
            <person name="Kimball J."/>
            <person name="Munholland J."/>
            <person name="Murphy C."/>
            <person name="Sarty D."/>
            <person name="Williams J."/>
            <person name="Nash J.H."/>
            <person name="Johnson S.C."/>
            <person name="Brown L.L."/>
        </authorList>
    </citation>
    <scope>NUCLEOTIDE SEQUENCE [LARGE SCALE GENOMIC DNA]</scope>
    <source>
        <strain>A449</strain>
    </source>
</reference>